<accession>Q31C96</accession>
<protein>
    <recommendedName>
        <fullName evidence="1">UPF0284 protein PMT9312_0438</fullName>
    </recommendedName>
</protein>
<comment type="similarity">
    <text evidence="1">Belongs to the UPF0284 family.</text>
</comment>
<reference key="1">
    <citation type="journal article" date="2006" name="Science">
        <title>Genomic islands and the ecology and evolution of Prochlorococcus.</title>
        <authorList>
            <person name="Coleman M.L."/>
            <person name="Sullivan M.B."/>
            <person name="Martiny A.C."/>
            <person name="Steglich C."/>
            <person name="Barry K."/>
            <person name="Delong E.F."/>
            <person name="Chisholm S.W."/>
        </authorList>
    </citation>
    <scope>NUCLEOTIDE SEQUENCE [LARGE SCALE GENOMIC DNA]</scope>
    <source>
        <strain>MIT 9312</strain>
    </source>
</reference>
<dbReference type="EMBL" id="CP000111">
    <property type="protein sequence ID" value="ABB49499.1"/>
    <property type="molecule type" value="Genomic_DNA"/>
</dbReference>
<dbReference type="RefSeq" id="WP_011375998.1">
    <property type="nucleotide sequence ID" value="NC_007577.1"/>
</dbReference>
<dbReference type="SMR" id="Q31C96"/>
<dbReference type="STRING" id="74546.PMT9312_0438"/>
<dbReference type="KEGG" id="pmi:PMT9312_0438"/>
<dbReference type="eggNOG" id="COG2038">
    <property type="taxonomic scope" value="Bacteria"/>
</dbReference>
<dbReference type="HOGENOM" id="CLU_053134_1_0_3"/>
<dbReference type="OrthoDB" id="418257at2"/>
<dbReference type="Proteomes" id="UP000002715">
    <property type="component" value="Chromosome"/>
</dbReference>
<dbReference type="GO" id="GO:0008939">
    <property type="term" value="F:nicotinate-nucleotide-dimethylbenzimidazole phosphoribosyltransferase activity"/>
    <property type="evidence" value="ECO:0007669"/>
    <property type="project" value="InterPro"/>
</dbReference>
<dbReference type="CDD" id="cd02439">
    <property type="entry name" value="DMB-PRT_CobT"/>
    <property type="match status" value="1"/>
</dbReference>
<dbReference type="Gene3D" id="3.40.50.10210">
    <property type="match status" value="1"/>
</dbReference>
<dbReference type="HAMAP" id="MF_01086">
    <property type="entry name" value="UPF0284"/>
    <property type="match status" value="1"/>
</dbReference>
<dbReference type="InterPro" id="IPR003200">
    <property type="entry name" value="Nict_dMeBzImd_PRibTrfase"/>
</dbReference>
<dbReference type="InterPro" id="IPR002805">
    <property type="entry name" value="Nict_dMeBzImd_PRibTrfase_arc"/>
</dbReference>
<dbReference type="InterPro" id="IPR036087">
    <property type="entry name" value="Nict_dMeBzImd_PRibTrfase_sf"/>
</dbReference>
<dbReference type="NCBIfam" id="NF003369">
    <property type="entry name" value="PRK04447.1-2"/>
    <property type="match status" value="1"/>
</dbReference>
<dbReference type="PANTHER" id="PTHR38811">
    <property type="match status" value="1"/>
</dbReference>
<dbReference type="PANTHER" id="PTHR38811:SF1">
    <property type="entry name" value="UPF0284 PROTEIN SLL1500"/>
    <property type="match status" value="1"/>
</dbReference>
<dbReference type="Pfam" id="PF02277">
    <property type="entry name" value="DBI_PRT"/>
    <property type="match status" value="1"/>
</dbReference>
<dbReference type="SUPFAM" id="SSF52733">
    <property type="entry name" value="Nicotinate mononucleotide:5,6-dimethylbenzimidazole phosphoribosyltransferase (CobT)"/>
    <property type="match status" value="1"/>
</dbReference>
<name>Y438_PROM9</name>
<organism>
    <name type="scientific">Prochlorococcus marinus (strain MIT 9312)</name>
    <dbReference type="NCBI Taxonomy" id="74546"/>
    <lineage>
        <taxon>Bacteria</taxon>
        <taxon>Bacillati</taxon>
        <taxon>Cyanobacteriota</taxon>
        <taxon>Cyanophyceae</taxon>
        <taxon>Synechococcales</taxon>
        <taxon>Prochlorococcaceae</taxon>
        <taxon>Prochlorococcus</taxon>
    </lineage>
</organism>
<feature type="chain" id="PRO_1000064865" description="UPF0284 protein PMT9312_0438">
    <location>
        <begin position="1"/>
        <end position="385"/>
    </location>
</feature>
<gene>
    <name type="ordered locus">PMT9312_0438</name>
</gene>
<evidence type="ECO:0000255" key="1">
    <source>
        <dbReference type="HAMAP-Rule" id="MF_01086"/>
    </source>
</evidence>
<proteinExistence type="inferred from homology"/>
<sequence length="385" mass="41844">MYSTELGINLFGSESNKKIQLNRIKILQKKINNFKIFLVIAGTNTSQIKGISAAGINAKSRRITALADAEFLLKGASKDHKYKLPRLNAGVTPALISHVCSKLINVYPVIVPLGIGVRPYFNHLVVEDRDLGPSNCLTTGKSMTKERVLNLYEKGLAIGKSSKQPILISESVPGGTTTAQAVMEAFGLRVSNLVGSSLFKAPRELRRKVVQKGLLNANLKTDFDSFDVVASVGDPFQAFSMGLLIGARLANQPVILSGGSQMLAVILLVLEFLGEKNKDDFIEDVFIATTGWLVKDNSLNDLLNLINEKYDANLLGLASPLNFQSSIYKELMDYELGHVKEGVGAGGISILAFLNGFKNKEIVSLCQQNLEIMKGLGQISLEKDC</sequence>